<sequence length="470" mass="51387">MKFKSLPMFALLMLGGCSLIPDYQQPAAPMQAQWPTGQAYGGQGDQRSIATALPKAKEFFKDPALVRLLDAALENNRDLRIAAKNVESYRALYRIQRAERFPTLDGQASGNRTRLPDDLSPTGDSRIDSQYQVGLVTAYELDLFGRIRSLSNQALEKYLATEEAQRSVQIALIGDVATTYFLWRTDQALLELTEATLTSYVESLAMIESSAWAGTSSELDVRQARTLVNQAQAQQALYTRRIAQDVNALELLLGSKIPTDLPKNSPLAMSALGKVPAGLPADLLLNRPDIRSAEHQLMAANANIGAARAAFFPRISLTASAGSASSDLDGLFNSGSDSWSFAPQISVPIFNAGKLRANLDYAELQKDVGVATYEKSIQTAFREVADGLAARGTYGKQLSAQSELVDNYKAYFSLAQQRYDQGVDSYLTVLDAQRELFSSQQKLLNDQLDQINSEVQLYKALGGGWSVSQN</sequence>
<comment type="function">
    <text>The outer membrane component of an organic solvent efflux pump. Involved in export of a number of organic solvents, including toluene and styrene. This is the most important solvent efflux pump in this strain, although it can export AMP and some antibiotics.</text>
</comment>
<comment type="subcellular location">
    <subcellularLocation>
        <location evidence="5">Cell outer membrane</location>
        <topology evidence="1">Lipid-anchor</topology>
    </subcellularLocation>
</comment>
<comment type="induction">
    <text evidence="3 4">Constitutively expressed; the ttgGHI operon is further induced about 4-fold by toluene and styrene but not by antibiotics.</text>
</comment>
<comment type="similarity">
    <text evidence="5">Belongs to the outer membrane factor (OMF) (TC 1.B.17) family.</text>
</comment>
<keyword id="KW-0998">Cell outer membrane</keyword>
<keyword id="KW-0449">Lipoprotein</keyword>
<keyword id="KW-0472">Membrane</keyword>
<keyword id="KW-0564">Palmitate</keyword>
<keyword id="KW-0614">Plasmid</keyword>
<keyword id="KW-0732">Signal</keyword>
<keyword id="KW-0812">Transmembrane</keyword>
<keyword id="KW-1134">Transmembrane beta strand</keyword>
<geneLocation type="plasmid">
    <name>pGRT1</name>
</geneLocation>
<protein>
    <recommendedName>
        <fullName>Toluene efflux pump outer membrane protein TtgI</fullName>
    </recommendedName>
</protein>
<proteinExistence type="evidence at transcript level"/>
<accession>Q93PU3</accession>
<dbReference type="EMBL" id="HM626202">
    <property type="protein sequence ID" value="AAK69565.2"/>
    <property type="molecule type" value="Genomic_DNA"/>
</dbReference>
<dbReference type="RefSeq" id="WP_014003971.1">
    <property type="nucleotide sequence ID" value="NC_015855.1"/>
</dbReference>
<dbReference type="RefSeq" id="YP_004750625.1">
    <property type="nucleotide sequence ID" value="NC_015855.1"/>
</dbReference>
<dbReference type="SMR" id="Q93PU3"/>
<dbReference type="TCDB" id="2.A.6.2.11">
    <property type="family name" value="the resistance-nodulation-cell division (rnd) superfamily"/>
</dbReference>
<dbReference type="Proteomes" id="UP000006503">
    <property type="component" value="Plasmid pGRT1"/>
</dbReference>
<dbReference type="GO" id="GO:0009279">
    <property type="term" value="C:cell outer membrane"/>
    <property type="evidence" value="ECO:0007669"/>
    <property type="project" value="UniProtKB-SubCell"/>
</dbReference>
<dbReference type="GO" id="GO:0015562">
    <property type="term" value="F:efflux transmembrane transporter activity"/>
    <property type="evidence" value="ECO:0007669"/>
    <property type="project" value="InterPro"/>
</dbReference>
<dbReference type="Gene3D" id="1.20.1600.10">
    <property type="entry name" value="Outer membrane efflux proteins (OEP)"/>
    <property type="match status" value="1"/>
</dbReference>
<dbReference type="Gene3D" id="2.20.200.10">
    <property type="entry name" value="Outer membrane efflux proteins (OEP)"/>
    <property type="match status" value="1"/>
</dbReference>
<dbReference type="InterPro" id="IPR050737">
    <property type="entry name" value="OMF"/>
</dbReference>
<dbReference type="InterPro" id="IPR003423">
    <property type="entry name" value="OMP_efflux"/>
</dbReference>
<dbReference type="InterPro" id="IPR010131">
    <property type="entry name" value="RND_efflux_OM_lipoprot_NodT"/>
</dbReference>
<dbReference type="NCBIfam" id="TIGR01845">
    <property type="entry name" value="outer_NodT"/>
    <property type="match status" value="1"/>
</dbReference>
<dbReference type="PANTHER" id="PTHR30203:SF32">
    <property type="entry name" value="CATION EFFLUX SYSTEM PROTEIN CUSC"/>
    <property type="match status" value="1"/>
</dbReference>
<dbReference type="PANTHER" id="PTHR30203">
    <property type="entry name" value="OUTER MEMBRANE CATION EFFLUX PROTEIN"/>
    <property type="match status" value="1"/>
</dbReference>
<dbReference type="Pfam" id="PF02321">
    <property type="entry name" value="OEP"/>
    <property type="match status" value="2"/>
</dbReference>
<dbReference type="SUPFAM" id="SSF56954">
    <property type="entry name" value="Outer membrane efflux proteins (OEP)"/>
    <property type="match status" value="1"/>
</dbReference>
<dbReference type="PROSITE" id="PS51257">
    <property type="entry name" value="PROKAR_LIPOPROTEIN"/>
    <property type="match status" value="1"/>
</dbReference>
<organism>
    <name type="scientific">Pseudomonas putida (strain DOT-T1E)</name>
    <dbReference type="NCBI Taxonomy" id="1196325"/>
    <lineage>
        <taxon>Bacteria</taxon>
        <taxon>Pseudomonadati</taxon>
        <taxon>Pseudomonadota</taxon>
        <taxon>Gammaproteobacteria</taxon>
        <taxon>Pseudomonadales</taxon>
        <taxon>Pseudomonadaceae</taxon>
        <taxon>Pseudomonas</taxon>
    </lineage>
</organism>
<evidence type="ECO:0000255" key="1">
    <source>
        <dbReference type="PROSITE-ProRule" id="PRU00303"/>
    </source>
</evidence>
<evidence type="ECO:0000256" key="2">
    <source>
        <dbReference type="SAM" id="MobiDB-lite"/>
    </source>
</evidence>
<evidence type="ECO:0000269" key="3">
    <source>
    </source>
</evidence>
<evidence type="ECO:0000269" key="4">
    <source>
    </source>
</evidence>
<evidence type="ECO:0000305" key="5"/>
<feature type="signal peptide" evidence="1">
    <location>
        <begin position="1"/>
        <end position="16"/>
    </location>
</feature>
<feature type="chain" id="PRO_0000031007" description="Toluene efflux pump outer membrane protein TtgI">
    <location>
        <begin position="17"/>
        <end position="470"/>
    </location>
</feature>
<feature type="region of interest" description="Disordered" evidence="2">
    <location>
        <begin position="104"/>
        <end position="123"/>
    </location>
</feature>
<feature type="lipid moiety-binding region" description="N-palmitoyl cysteine" evidence="1">
    <location>
        <position position="17"/>
    </location>
</feature>
<feature type="lipid moiety-binding region" description="S-diacylglycerol cysteine" evidence="1">
    <location>
        <position position="17"/>
    </location>
</feature>
<gene>
    <name type="primary">ttgI</name>
</gene>
<name>TTGI_PSEPT</name>
<reference key="1">
    <citation type="journal article" date="2001" name="J. Bacteriol.">
        <title>Three efflux pumps are required to provide efficient tolerance to toluene in Pseudomonas putida DOT-T1E.</title>
        <authorList>
            <person name="Rojas A."/>
            <person name="Duque E."/>
            <person name="Mosqueda G."/>
            <person name="Golden G."/>
            <person name="Hurtado A."/>
            <person name="Ramos J.L."/>
            <person name="Segura A."/>
        </authorList>
    </citation>
    <scope>NUCLEOTIDE SEQUENCE [GENOMIC DNA]</scope>
    <scope>INDUCTION</scope>
    <source>
        <strain>DOT-T1E</strain>
    </source>
</reference>
<reference key="2">
    <citation type="journal article" date="2011" name="Environ. Microbiol.">
        <title>The pGRT1 plasmid of Pseudomonas putida DOT-T1E encodes functions relevant for survival under harsh conditions in the environment.</title>
        <authorList>
            <person name="Molina L."/>
            <person name="Duque E."/>
            <person name="Gomez M.J."/>
            <person name="Krell T."/>
            <person name="Lacal J."/>
            <person name="Garcia-Puente A."/>
            <person name="Garcia V."/>
            <person name="Matilla M.A."/>
            <person name="Ramos J.L."/>
            <person name="Segura A."/>
        </authorList>
    </citation>
    <scope>NUCLEOTIDE SEQUENCE [LARGE SCALE GENOMIC DNA]</scope>
    <scope>SEQUENCE REVISION TO 289 AND 378</scope>
    <source>
        <strain>DOT-T1E</strain>
    </source>
</reference>
<reference key="3">
    <citation type="journal article" date="2013" name="Microb. Biotechnol.">
        <title>Metabolic potential of the organic-solvent tolerant Pseudomonas putida DOT-T1E deduced from its annotated genome.</title>
        <authorList>
            <person name="Udaondo Z."/>
            <person name="Molina L."/>
            <person name="Daniels C."/>
            <person name="Gomez M.J."/>
            <person name="Molina-Henares M.A."/>
            <person name="Matilla M.A."/>
            <person name="Roca A."/>
            <person name="Fernandez M."/>
            <person name="Duque E."/>
            <person name="Segura A."/>
            <person name="Ramos J.L."/>
        </authorList>
    </citation>
    <scope>NUCLEOTIDE SEQUENCE [LARGE SCALE GENOMIC DNA]</scope>
    <source>
        <strain>DOT-T1E</strain>
    </source>
</reference>
<reference key="4">
    <citation type="journal article" date="2003" name="J. Bacteriol.">
        <title>In vivo and in vitro evidence that TtgV is the specific regulator of the TtgGHI multidrug and solvent efflux pump of Pseudomonas putida.</title>
        <authorList>
            <person name="Rojas A."/>
            <person name="Segura A."/>
            <person name="Guazzaroni M.E."/>
            <person name="Teran W."/>
            <person name="Hurtado A."/>
            <person name="Gallegos M.T."/>
            <person name="Ramos J.L."/>
        </authorList>
    </citation>
    <scope>OPERON ORGANIZATION</scope>
    <scope>INDUCTION</scope>
    <source>
        <strain>DOT-T1E</strain>
    </source>
</reference>